<feature type="chain" id="PRO_0000273716" description="Vesicle-associated membrane protein 4">
    <location>
        <begin position="1"/>
        <end position="141"/>
    </location>
</feature>
<feature type="topological domain" description="Cytoplasmic" evidence="4">
    <location>
        <begin position="1"/>
        <end position="115"/>
    </location>
</feature>
<feature type="transmembrane region" description="Helical; Anchor for type IV membrane protein" evidence="4">
    <location>
        <begin position="116"/>
        <end position="136"/>
    </location>
</feature>
<feature type="topological domain" description="Vesicular" evidence="4">
    <location>
        <begin position="137"/>
        <end position="141"/>
    </location>
</feature>
<feature type="domain" description="v-SNARE coiled-coil homology" evidence="5">
    <location>
        <begin position="52"/>
        <end position="112"/>
    </location>
</feature>
<feature type="region of interest" description="Disordered" evidence="6">
    <location>
        <begin position="1"/>
        <end position="51"/>
    </location>
</feature>
<feature type="modified residue" description="Phosphoserine" evidence="2">
    <location>
        <position position="17"/>
    </location>
</feature>
<feature type="modified residue" description="Phosphoserine" evidence="3">
    <location>
        <position position="30"/>
    </location>
</feature>
<name>VAMP4_BOVIN</name>
<accession>Q32L97</accession>
<accession>A5PK89</accession>
<evidence type="ECO:0000250" key="1"/>
<evidence type="ECO:0000250" key="2">
    <source>
        <dbReference type="UniProtKB" id="O70480"/>
    </source>
</evidence>
<evidence type="ECO:0000250" key="3">
    <source>
        <dbReference type="UniProtKB" id="O75379"/>
    </source>
</evidence>
<evidence type="ECO:0000255" key="4"/>
<evidence type="ECO:0000255" key="5">
    <source>
        <dbReference type="PROSITE-ProRule" id="PRU00290"/>
    </source>
</evidence>
<evidence type="ECO:0000256" key="6">
    <source>
        <dbReference type="SAM" id="MobiDB-lite"/>
    </source>
</evidence>
<evidence type="ECO:0000305" key="7"/>
<keyword id="KW-0175">Coiled coil</keyword>
<keyword id="KW-0333">Golgi apparatus</keyword>
<keyword id="KW-0472">Membrane</keyword>
<keyword id="KW-0597">Phosphoprotein</keyword>
<keyword id="KW-1185">Reference proteome</keyword>
<keyword id="KW-0812">Transmembrane</keyword>
<keyword id="KW-1133">Transmembrane helix</keyword>
<gene>
    <name type="primary">VAMP4</name>
</gene>
<sequence length="141" mass="16393">MPPKFKRHLNDDDVTGSVKSERRNLLEDDSDEEEDFFLRGPSGPRFGPRNDKIKHVQNQVDEVIDVMQENITKVIERGERLDELQDKSESLSDNATAFSNRSKQLRRQMWWRGCKIKAIMALVAVILLLVIIILIVVKYRT</sequence>
<organism>
    <name type="scientific">Bos taurus</name>
    <name type="common">Bovine</name>
    <dbReference type="NCBI Taxonomy" id="9913"/>
    <lineage>
        <taxon>Eukaryota</taxon>
        <taxon>Metazoa</taxon>
        <taxon>Chordata</taxon>
        <taxon>Craniata</taxon>
        <taxon>Vertebrata</taxon>
        <taxon>Euteleostomi</taxon>
        <taxon>Mammalia</taxon>
        <taxon>Eutheria</taxon>
        <taxon>Laurasiatheria</taxon>
        <taxon>Artiodactyla</taxon>
        <taxon>Ruminantia</taxon>
        <taxon>Pecora</taxon>
        <taxon>Bovidae</taxon>
        <taxon>Bovinae</taxon>
        <taxon>Bos</taxon>
    </lineage>
</organism>
<dbReference type="EMBL" id="BC109690">
    <property type="protein sequence ID" value="AAI09691.1"/>
    <property type="molecule type" value="mRNA"/>
</dbReference>
<dbReference type="EMBL" id="BC142401">
    <property type="protein sequence ID" value="AAI42402.1"/>
    <property type="molecule type" value="mRNA"/>
</dbReference>
<dbReference type="RefSeq" id="NP_001069906.1">
    <property type="nucleotide sequence ID" value="NM_001076438.2"/>
</dbReference>
<dbReference type="RefSeq" id="XP_005216973.1">
    <property type="nucleotide sequence ID" value="XM_005216916.4"/>
</dbReference>
<dbReference type="RefSeq" id="XP_010811531.1">
    <property type="nucleotide sequence ID" value="XM_010813229.4"/>
</dbReference>
<dbReference type="RefSeq" id="XP_059731530.1">
    <property type="nucleotide sequence ID" value="XM_059875547.1"/>
</dbReference>
<dbReference type="SMR" id="Q32L97"/>
<dbReference type="FunCoup" id="Q32L97">
    <property type="interactions" value="1804"/>
</dbReference>
<dbReference type="STRING" id="9913.ENSBTAP00000073260"/>
<dbReference type="PaxDb" id="9913-ENSBTAP00000027435"/>
<dbReference type="Ensembl" id="ENSBTAT00000094060.1">
    <property type="protein sequence ID" value="ENSBTAP00000102910.1"/>
    <property type="gene ID" value="ENSBTAG00000020591.7"/>
</dbReference>
<dbReference type="GeneID" id="616923"/>
<dbReference type="KEGG" id="bta:616923"/>
<dbReference type="CTD" id="8674"/>
<dbReference type="VEuPathDB" id="HostDB:ENSBTAG00000020591"/>
<dbReference type="VGNC" id="VGNC:36758">
    <property type="gene designation" value="VAMP4"/>
</dbReference>
<dbReference type="eggNOG" id="KOG0860">
    <property type="taxonomic scope" value="Eukaryota"/>
</dbReference>
<dbReference type="GeneTree" id="ENSGT00940000155005"/>
<dbReference type="HOGENOM" id="CLU_149550_0_0_1"/>
<dbReference type="InParanoid" id="Q32L97"/>
<dbReference type="OMA" id="NHDKASN"/>
<dbReference type="OrthoDB" id="190375at2759"/>
<dbReference type="TreeFam" id="TF313666"/>
<dbReference type="Reactome" id="R-BTA-6811440">
    <property type="pathway name" value="Retrograde transport at the Trans-Golgi-Network"/>
</dbReference>
<dbReference type="Reactome" id="R-BTA-8856825">
    <property type="pathway name" value="Cargo recognition for clathrin-mediated endocytosis"/>
</dbReference>
<dbReference type="Reactome" id="R-BTA-8856828">
    <property type="pathway name" value="Clathrin-mediated endocytosis"/>
</dbReference>
<dbReference type="Proteomes" id="UP000009136">
    <property type="component" value="Chromosome 16"/>
</dbReference>
<dbReference type="Bgee" id="ENSBTAG00000020591">
    <property type="expression patterns" value="Expressed in occipital lobe and 105 other cell types or tissues"/>
</dbReference>
<dbReference type="GO" id="GO:0009986">
    <property type="term" value="C:cell surface"/>
    <property type="evidence" value="ECO:0007669"/>
    <property type="project" value="Ensembl"/>
</dbReference>
<dbReference type="GO" id="GO:0045335">
    <property type="term" value="C:phagocytic vesicle"/>
    <property type="evidence" value="ECO:0007669"/>
    <property type="project" value="Ensembl"/>
</dbReference>
<dbReference type="GO" id="GO:0098954">
    <property type="term" value="C:presynaptic endosome membrane"/>
    <property type="evidence" value="ECO:0007669"/>
    <property type="project" value="Ensembl"/>
</dbReference>
<dbReference type="GO" id="GO:0031201">
    <property type="term" value="C:SNARE complex"/>
    <property type="evidence" value="ECO:0000318"/>
    <property type="project" value="GO_Central"/>
</dbReference>
<dbReference type="GO" id="GO:0005802">
    <property type="term" value="C:trans-Golgi network"/>
    <property type="evidence" value="ECO:0000318"/>
    <property type="project" value="GO_Central"/>
</dbReference>
<dbReference type="GO" id="GO:0071346">
    <property type="term" value="P:cellular response to type II interferon"/>
    <property type="evidence" value="ECO:0007669"/>
    <property type="project" value="Ensembl"/>
</dbReference>
<dbReference type="GO" id="GO:0032456">
    <property type="term" value="P:endocytic recycling"/>
    <property type="evidence" value="ECO:0007669"/>
    <property type="project" value="Ensembl"/>
</dbReference>
<dbReference type="GO" id="GO:0090161">
    <property type="term" value="P:Golgi ribbon formation"/>
    <property type="evidence" value="ECO:0007669"/>
    <property type="project" value="InterPro"/>
</dbReference>
<dbReference type="GO" id="GO:0043001">
    <property type="term" value="P:Golgi to plasma membrane protein transport"/>
    <property type="evidence" value="ECO:0007669"/>
    <property type="project" value="Ensembl"/>
</dbReference>
<dbReference type="GO" id="GO:0042996">
    <property type="term" value="P:regulation of Golgi to plasma membrane protein transport"/>
    <property type="evidence" value="ECO:0007669"/>
    <property type="project" value="Ensembl"/>
</dbReference>
<dbReference type="GO" id="GO:0035493">
    <property type="term" value="P:SNARE complex assembly"/>
    <property type="evidence" value="ECO:0000318"/>
    <property type="project" value="GO_Central"/>
</dbReference>
<dbReference type="CDD" id="cd15869">
    <property type="entry name" value="R-SNARE_VAMP4"/>
    <property type="match status" value="1"/>
</dbReference>
<dbReference type="FunFam" id="1.20.5.110:FF:000050">
    <property type="entry name" value="Vesicle-associated membrane protein 4"/>
    <property type="match status" value="1"/>
</dbReference>
<dbReference type="Gene3D" id="1.20.5.110">
    <property type="match status" value="1"/>
</dbReference>
<dbReference type="InterPro" id="IPR001388">
    <property type="entry name" value="Synaptobrevin-like"/>
</dbReference>
<dbReference type="InterPro" id="IPR042855">
    <property type="entry name" value="V_SNARE_CC"/>
</dbReference>
<dbReference type="InterPro" id="IPR042887">
    <property type="entry name" value="VAMP4"/>
</dbReference>
<dbReference type="PANTHER" id="PTHR46897">
    <property type="entry name" value="VESICLE-ASSOCIATED MEMBRANE PROTEIN 4"/>
    <property type="match status" value="1"/>
</dbReference>
<dbReference type="PANTHER" id="PTHR46897:SF1">
    <property type="entry name" value="VESICLE-ASSOCIATED MEMBRANE PROTEIN 4"/>
    <property type="match status" value="1"/>
</dbReference>
<dbReference type="Pfam" id="PF00957">
    <property type="entry name" value="Synaptobrevin"/>
    <property type="match status" value="1"/>
</dbReference>
<dbReference type="PRINTS" id="PR00219">
    <property type="entry name" value="SYNAPTOBREVN"/>
</dbReference>
<dbReference type="SUPFAM" id="SSF58038">
    <property type="entry name" value="SNARE fusion complex"/>
    <property type="match status" value="1"/>
</dbReference>
<dbReference type="PROSITE" id="PS00417">
    <property type="entry name" value="SYNAPTOBREVIN"/>
    <property type="match status" value="1"/>
</dbReference>
<dbReference type="PROSITE" id="PS50892">
    <property type="entry name" value="V_SNARE"/>
    <property type="match status" value="1"/>
</dbReference>
<proteinExistence type="evidence at transcript level"/>
<reference key="1">
    <citation type="submission" date="2007-06" db="EMBL/GenBank/DDBJ databases">
        <authorList>
            <consortium name="NIH - Mammalian Gene Collection (MGC) project"/>
        </authorList>
    </citation>
    <scope>NUCLEOTIDE SEQUENCE [LARGE SCALE MRNA]</scope>
    <source>
        <strain>Crossbred X Angus</strain>
        <strain>Hereford</strain>
        <tissue>Hypothalamus</tissue>
        <tissue>Liver</tissue>
    </source>
</reference>
<protein>
    <recommendedName>
        <fullName>Vesicle-associated membrane protein 4</fullName>
        <shortName>VAMP-4</shortName>
    </recommendedName>
</protein>
<comment type="function">
    <text evidence="1">Involved in the pathway that functions to remove an inhibitor (probably synaptotagmin-4) of calcium-triggered exocytosis during the maturation of secretory granules. May be a marker for this sorting pathway that is critical for remodeling the secretory response of granule (By similarity).</text>
</comment>
<comment type="subunit">
    <text evidence="2 3">Identified in a complex containing STX6, STX12, VAMP4 and VTI1A (By similarity). Interacts with BAIAP3; this interaction is increased in the presence of calcium (By similarity).</text>
</comment>
<comment type="subcellular location">
    <subcellularLocation>
        <location evidence="7">Golgi apparatus</location>
        <location evidence="7">trans-Golgi network membrane</location>
        <topology evidence="7">Single-pass type IV membrane protein</topology>
    </subcellularLocation>
    <text evidence="1">Associated with trans Golgi network (TGN) and newly formed immature secretory granules (ISG). Not found on the mature secretory organelles (By similarity).</text>
</comment>
<comment type="similarity">
    <text evidence="7">Belongs to the synaptobrevin family.</text>
</comment>